<dbReference type="EMBL" id="CP001048">
    <property type="protein sequence ID" value="ACC90836.1"/>
    <property type="molecule type" value="Genomic_DNA"/>
</dbReference>
<dbReference type="RefSeq" id="WP_002213425.1">
    <property type="nucleotide sequence ID" value="NZ_CP009780.1"/>
</dbReference>
<dbReference type="SMR" id="B2K5M7"/>
<dbReference type="GeneID" id="97454234"/>
<dbReference type="KEGG" id="ypb:YPTS_3887"/>
<dbReference type="PATRIC" id="fig|502801.10.peg.3352"/>
<dbReference type="GO" id="GO:0015934">
    <property type="term" value="C:large ribosomal subunit"/>
    <property type="evidence" value="ECO:0007669"/>
    <property type="project" value="InterPro"/>
</dbReference>
<dbReference type="GO" id="GO:0019843">
    <property type="term" value="F:rRNA binding"/>
    <property type="evidence" value="ECO:0007669"/>
    <property type="project" value="UniProtKB-UniRule"/>
</dbReference>
<dbReference type="GO" id="GO:0003735">
    <property type="term" value="F:structural constituent of ribosome"/>
    <property type="evidence" value="ECO:0007669"/>
    <property type="project" value="InterPro"/>
</dbReference>
<dbReference type="GO" id="GO:0016740">
    <property type="term" value="F:transferase activity"/>
    <property type="evidence" value="ECO:0007669"/>
    <property type="project" value="InterPro"/>
</dbReference>
<dbReference type="GO" id="GO:0002181">
    <property type="term" value="P:cytoplasmic translation"/>
    <property type="evidence" value="ECO:0007669"/>
    <property type="project" value="TreeGrafter"/>
</dbReference>
<dbReference type="FunFam" id="2.30.30.30:FF:000001">
    <property type="entry name" value="50S ribosomal protein L2"/>
    <property type="match status" value="1"/>
</dbReference>
<dbReference type="FunFam" id="2.40.50.140:FF:000003">
    <property type="entry name" value="50S ribosomal protein L2"/>
    <property type="match status" value="1"/>
</dbReference>
<dbReference type="FunFam" id="4.10.950.10:FF:000001">
    <property type="entry name" value="50S ribosomal protein L2"/>
    <property type="match status" value="1"/>
</dbReference>
<dbReference type="Gene3D" id="2.30.30.30">
    <property type="match status" value="1"/>
</dbReference>
<dbReference type="Gene3D" id="2.40.50.140">
    <property type="entry name" value="Nucleic acid-binding proteins"/>
    <property type="match status" value="1"/>
</dbReference>
<dbReference type="Gene3D" id="4.10.950.10">
    <property type="entry name" value="Ribosomal protein L2, domain 3"/>
    <property type="match status" value="1"/>
</dbReference>
<dbReference type="HAMAP" id="MF_01320_B">
    <property type="entry name" value="Ribosomal_uL2_B"/>
    <property type="match status" value="1"/>
</dbReference>
<dbReference type="InterPro" id="IPR012340">
    <property type="entry name" value="NA-bd_OB-fold"/>
</dbReference>
<dbReference type="InterPro" id="IPR014722">
    <property type="entry name" value="Rib_uL2_dom2"/>
</dbReference>
<dbReference type="InterPro" id="IPR002171">
    <property type="entry name" value="Ribosomal_uL2"/>
</dbReference>
<dbReference type="InterPro" id="IPR005880">
    <property type="entry name" value="Ribosomal_uL2_bac/org-type"/>
</dbReference>
<dbReference type="InterPro" id="IPR022669">
    <property type="entry name" value="Ribosomal_uL2_C"/>
</dbReference>
<dbReference type="InterPro" id="IPR022671">
    <property type="entry name" value="Ribosomal_uL2_CS"/>
</dbReference>
<dbReference type="InterPro" id="IPR014726">
    <property type="entry name" value="Ribosomal_uL2_dom3"/>
</dbReference>
<dbReference type="InterPro" id="IPR022666">
    <property type="entry name" value="Ribosomal_uL2_RNA-bd_dom"/>
</dbReference>
<dbReference type="InterPro" id="IPR008991">
    <property type="entry name" value="Translation_prot_SH3-like_sf"/>
</dbReference>
<dbReference type="NCBIfam" id="TIGR01171">
    <property type="entry name" value="rplB_bact"/>
    <property type="match status" value="1"/>
</dbReference>
<dbReference type="PANTHER" id="PTHR13691:SF5">
    <property type="entry name" value="LARGE RIBOSOMAL SUBUNIT PROTEIN UL2M"/>
    <property type="match status" value="1"/>
</dbReference>
<dbReference type="PANTHER" id="PTHR13691">
    <property type="entry name" value="RIBOSOMAL PROTEIN L2"/>
    <property type="match status" value="1"/>
</dbReference>
<dbReference type="Pfam" id="PF00181">
    <property type="entry name" value="Ribosomal_L2"/>
    <property type="match status" value="1"/>
</dbReference>
<dbReference type="Pfam" id="PF03947">
    <property type="entry name" value="Ribosomal_L2_C"/>
    <property type="match status" value="1"/>
</dbReference>
<dbReference type="PIRSF" id="PIRSF002158">
    <property type="entry name" value="Ribosomal_L2"/>
    <property type="match status" value="1"/>
</dbReference>
<dbReference type="SMART" id="SM01383">
    <property type="entry name" value="Ribosomal_L2"/>
    <property type="match status" value="1"/>
</dbReference>
<dbReference type="SMART" id="SM01382">
    <property type="entry name" value="Ribosomal_L2_C"/>
    <property type="match status" value="1"/>
</dbReference>
<dbReference type="SUPFAM" id="SSF50249">
    <property type="entry name" value="Nucleic acid-binding proteins"/>
    <property type="match status" value="1"/>
</dbReference>
<dbReference type="SUPFAM" id="SSF50104">
    <property type="entry name" value="Translation proteins SH3-like domain"/>
    <property type="match status" value="1"/>
</dbReference>
<dbReference type="PROSITE" id="PS00467">
    <property type="entry name" value="RIBOSOMAL_L2"/>
    <property type="match status" value="1"/>
</dbReference>
<organism>
    <name type="scientific">Yersinia pseudotuberculosis serotype IB (strain PB1/+)</name>
    <dbReference type="NCBI Taxonomy" id="502801"/>
    <lineage>
        <taxon>Bacteria</taxon>
        <taxon>Pseudomonadati</taxon>
        <taxon>Pseudomonadota</taxon>
        <taxon>Gammaproteobacteria</taxon>
        <taxon>Enterobacterales</taxon>
        <taxon>Yersiniaceae</taxon>
        <taxon>Yersinia</taxon>
    </lineage>
</organism>
<comment type="function">
    <text evidence="1">One of the primary rRNA binding proteins. Required for association of the 30S and 50S subunits to form the 70S ribosome, for tRNA binding and peptide bond formation. It has been suggested to have peptidyltransferase activity; this is somewhat controversial. Makes several contacts with the 16S rRNA in the 70S ribosome.</text>
</comment>
<comment type="subunit">
    <text evidence="1">Part of the 50S ribosomal subunit. Forms a bridge to the 30S subunit in the 70S ribosome.</text>
</comment>
<comment type="similarity">
    <text evidence="1">Belongs to the universal ribosomal protein uL2 family.</text>
</comment>
<proteinExistence type="inferred from homology"/>
<keyword id="KW-0687">Ribonucleoprotein</keyword>
<keyword id="KW-0689">Ribosomal protein</keyword>
<keyword id="KW-0694">RNA-binding</keyword>
<keyword id="KW-0699">rRNA-binding</keyword>
<sequence length="274" mass="30073">MAIVKCKPTSPGRRHVVKVVNPELHKGKPYAPLLEKLSKSGGRNNNGRITTRHIGGGHKQHYRLVDFKRNKDGIPAVVERLEYDPNRSANIALVLYKDGERRYILAPKGLKAGDQIQSGVDAAIKAGNTLPMRNIPVGSTVHNVEMKPGKGGQLARSAGAYVQIVARDGSYVTLRLRSGEMRKVQADCRATLGEVGNAEHMLRVLGKAGASRWRGIRPTVRGTAMNPVDHPHGGGEGRNFGKHPVTPWGVQTKGKKTRSNKRTDKFIVRRRSKK</sequence>
<gene>
    <name evidence="1" type="primary">rplB</name>
    <name type="ordered locus">YPTS_3887</name>
</gene>
<protein>
    <recommendedName>
        <fullName evidence="1">Large ribosomal subunit protein uL2</fullName>
    </recommendedName>
    <alternativeName>
        <fullName evidence="3">50S ribosomal protein L2</fullName>
    </alternativeName>
</protein>
<name>RL2_YERPB</name>
<accession>B2K5M7</accession>
<reference key="1">
    <citation type="submission" date="2008-04" db="EMBL/GenBank/DDBJ databases">
        <title>Complete sequence of Yersinia pseudotuberculosis PB1/+.</title>
        <authorList>
            <person name="Copeland A."/>
            <person name="Lucas S."/>
            <person name="Lapidus A."/>
            <person name="Glavina del Rio T."/>
            <person name="Dalin E."/>
            <person name="Tice H."/>
            <person name="Bruce D."/>
            <person name="Goodwin L."/>
            <person name="Pitluck S."/>
            <person name="Munk A.C."/>
            <person name="Brettin T."/>
            <person name="Detter J.C."/>
            <person name="Han C."/>
            <person name="Tapia R."/>
            <person name="Schmutz J."/>
            <person name="Larimer F."/>
            <person name="Land M."/>
            <person name="Hauser L."/>
            <person name="Challacombe J.F."/>
            <person name="Green L."/>
            <person name="Lindler L.E."/>
            <person name="Nikolich M.P."/>
            <person name="Richardson P."/>
        </authorList>
    </citation>
    <scope>NUCLEOTIDE SEQUENCE [LARGE SCALE GENOMIC DNA]</scope>
    <source>
        <strain>PB1/+</strain>
    </source>
</reference>
<feature type="chain" id="PRO_1000141644" description="Large ribosomal subunit protein uL2">
    <location>
        <begin position="1"/>
        <end position="274"/>
    </location>
</feature>
<feature type="region of interest" description="Disordered" evidence="2">
    <location>
        <begin position="221"/>
        <end position="274"/>
    </location>
</feature>
<evidence type="ECO:0000255" key="1">
    <source>
        <dbReference type="HAMAP-Rule" id="MF_01320"/>
    </source>
</evidence>
<evidence type="ECO:0000256" key="2">
    <source>
        <dbReference type="SAM" id="MobiDB-lite"/>
    </source>
</evidence>
<evidence type="ECO:0000305" key="3"/>